<reference key="1">
    <citation type="journal article" date="2010" name="J. Bacteriol.">
        <title>Whole genome sequences of two Xylella fastidiosa strains (M12 and M23) causing almond leaf scorch disease in California.</title>
        <authorList>
            <person name="Chen J."/>
            <person name="Xie G."/>
            <person name="Han S."/>
            <person name="Chertkov O."/>
            <person name="Sims D."/>
            <person name="Civerolo E.L."/>
        </authorList>
    </citation>
    <scope>NUCLEOTIDE SEQUENCE [LARGE SCALE GENOMIC DNA]</scope>
    <source>
        <strain>M12</strain>
    </source>
</reference>
<keyword id="KW-0028">Amino-acid biosynthesis</keyword>
<keyword id="KW-0413">Isomerase</keyword>
<keyword id="KW-0486">Methionine biosynthesis</keyword>
<protein>
    <recommendedName>
        <fullName evidence="1">Methylthioribose-1-phosphate isomerase</fullName>
        <shortName evidence="1">M1Pi</shortName>
        <shortName evidence="1">MTR-1-P isomerase</shortName>
        <ecNumber evidence="1">5.3.1.23</ecNumber>
    </recommendedName>
    <alternativeName>
        <fullName evidence="1">S-methyl-5-thioribose-1-phosphate isomerase</fullName>
    </alternativeName>
</protein>
<organism>
    <name type="scientific">Xylella fastidiosa (strain M12)</name>
    <dbReference type="NCBI Taxonomy" id="405440"/>
    <lineage>
        <taxon>Bacteria</taxon>
        <taxon>Pseudomonadati</taxon>
        <taxon>Pseudomonadota</taxon>
        <taxon>Gammaproteobacteria</taxon>
        <taxon>Lysobacterales</taxon>
        <taxon>Lysobacteraceae</taxon>
        <taxon>Xylella</taxon>
    </lineage>
</organism>
<gene>
    <name evidence="1" type="primary">mtnA</name>
    <name type="ordered locus">Xfasm12_2124</name>
</gene>
<dbReference type="EC" id="5.3.1.23" evidence="1"/>
<dbReference type="EMBL" id="CP000941">
    <property type="protein sequence ID" value="ACA12981.1"/>
    <property type="molecule type" value="Genomic_DNA"/>
</dbReference>
<dbReference type="RefSeq" id="WP_004084618.1">
    <property type="nucleotide sequence ID" value="NC_010513.1"/>
</dbReference>
<dbReference type="SMR" id="B0U5G3"/>
<dbReference type="KEGG" id="xfm:Xfasm12_2124"/>
<dbReference type="HOGENOM" id="CLU_016218_1_2_6"/>
<dbReference type="UniPathway" id="UPA00904">
    <property type="reaction ID" value="UER00874"/>
</dbReference>
<dbReference type="GO" id="GO:0046523">
    <property type="term" value="F:S-methyl-5-thioribose-1-phosphate isomerase activity"/>
    <property type="evidence" value="ECO:0007669"/>
    <property type="project" value="UniProtKB-UniRule"/>
</dbReference>
<dbReference type="GO" id="GO:0019509">
    <property type="term" value="P:L-methionine salvage from methylthioadenosine"/>
    <property type="evidence" value="ECO:0007669"/>
    <property type="project" value="UniProtKB-UniRule"/>
</dbReference>
<dbReference type="FunFam" id="1.20.120.420:FF:000003">
    <property type="entry name" value="Methylthioribose-1-phosphate isomerase"/>
    <property type="match status" value="1"/>
</dbReference>
<dbReference type="FunFam" id="3.40.50.10470:FF:000006">
    <property type="entry name" value="Methylthioribose-1-phosphate isomerase"/>
    <property type="match status" value="1"/>
</dbReference>
<dbReference type="Gene3D" id="1.20.120.420">
    <property type="entry name" value="translation initiation factor eif-2b, domain 1"/>
    <property type="match status" value="1"/>
</dbReference>
<dbReference type="Gene3D" id="3.40.50.10470">
    <property type="entry name" value="Translation initiation factor eif-2b, domain 2"/>
    <property type="match status" value="1"/>
</dbReference>
<dbReference type="HAMAP" id="MF_01678">
    <property type="entry name" value="Salvage_MtnA"/>
    <property type="match status" value="1"/>
</dbReference>
<dbReference type="InterPro" id="IPR000649">
    <property type="entry name" value="IF-2B-related"/>
</dbReference>
<dbReference type="InterPro" id="IPR005251">
    <property type="entry name" value="IF-M1Pi"/>
</dbReference>
<dbReference type="InterPro" id="IPR042529">
    <property type="entry name" value="IF_2B-like_C"/>
</dbReference>
<dbReference type="InterPro" id="IPR011559">
    <property type="entry name" value="Initiation_fac_2B_a/b/d"/>
</dbReference>
<dbReference type="InterPro" id="IPR027363">
    <property type="entry name" value="M1Pi_N"/>
</dbReference>
<dbReference type="InterPro" id="IPR037171">
    <property type="entry name" value="NagB/RpiA_transferase-like"/>
</dbReference>
<dbReference type="NCBIfam" id="TIGR00524">
    <property type="entry name" value="eIF-2B_rel"/>
    <property type="match status" value="1"/>
</dbReference>
<dbReference type="NCBIfam" id="NF004326">
    <property type="entry name" value="PRK05720.1"/>
    <property type="match status" value="1"/>
</dbReference>
<dbReference type="NCBIfam" id="TIGR00512">
    <property type="entry name" value="salvage_mtnA"/>
    <property type="match status" value="1"/>
</dbReference>
<dbReference type="PANTHER" id="PTHR43475">
    <property type="entry name" value="METHYLTHIORIBOSE-1-PHOSPHATE ISOMERASE"/>
    <property type="match status" value="1"/>
</dbReference>
<dbReference type="PANTHER" id="PTHR43475:SF1">
    <property type="entry name" value="METHYLTHIORIBOSE-1-PHOSPHATE ISOMERASE"/>
    <property type="match status" value="1"/>
</dbReference>
<dbReference type="Pfam" id="PF01008">
    <property type="entry name" value="IF-2B"/>
    <property type="match status" value="1"/>
</dbReference>
<dbReference type="SUPFAM" id="SSF100950">
    <property type="entry name" value="NagB/RpiA/CoA transferase-like"/>
    <property type="match status" value="1"/>
</dbReference>
<proteinExistence type="inferred from homology"/>
<feature type="chain" id="PRO_0000357275" description="Methylthioribose-1-phosphate isomerase">
    <location>
        <begin position="1"/>
        <end position="354"/>
    </location>
</feature>
<feature type="active site" description="Proton donor" evidence="1">
    <location>
        <position position="245"/>
    </location>
</feature>
<feature type="binding site" evidence="1">
    <location>
        <begin position="58"/>
        <end position="60"/>
    </location>
    <ligand>
        <name>substrate</name>
    </ligand>
</feature>
<feature type="binding site" evidence="1">
    <location>
        <position position="101"/>
    </location>
    <ligand>
        <name>substrate</name>
    </ligand>
</feature>
<feature type="binding site" evidence="1">
    <location>
        <position position="204"/>
    </location>
    <ligand>
        <name>substrate</name>
    </ligand>
</feature>
<feature type="binding site" evidence="1">
    <location>
        <begin position="255"/>
        <end position="256"/>
    </location>
    <ligand>
        <name>substrate</name>
    </ligand>
</feature>
<feature type="site" description="Transition state stabilizer" evidence="1">
    <location>
        <position position="165"/>
    </location>
</feature>
<evidence type="ECO:0000255" key="1">
    <source>
        <dbReference type="HAMAP-Rule" id="MF_01678"/>
    </source>
</evidence>
<evidence type="ECO:0000305" key="2"/>
<comment type="function">
    <text evidence="1">Catalyzes the interconversion of methylthioribose-1-phosphate (MTR-1-P) into methylthioribulose-1-phosphate (MTRu-1-P).</text>
</comment>
<comment type="catalytic activity">
    <reaction evidence="1">
        <text>5-(methylsulfanyl)-alpha-D-ribose 1-phosphate = 5-(methylsulfanyl)-D-ribulose 1-phosphate</text>
        <dbReference type="Rhea" id="RHEA:19989"/>
        <dbReference type="ChEBI" id="CHEBI:58533"/>
        <dbReference type="ChEBI" id="CHEBI:58548"/>
        <dbReference type="EC" id="5.3.1.23"/>
    </reaction>
</comment>
<comment type="pathway">
    <text evidence="1">Amino-acid biosynthesis; L-methionine biosynthesis via salvage pathway; L-methionine from S-methyl-5-thio-alpha-D-ribose 1-phosphate: step 1/6.</text>
</comment>
<comment type="similarity">
    <text evidence="2">Belongs to the eIF-2B alpha/beta/delta subunits family. MtnA subfamily.</text>
</comment>
<name>MTNA_XYLFM</name>
<sequence length="354" mass="37966">MHHPLPPDDTLYDQVRPILWTGYFLKLLDQRKLPFVVEYVECHSSEDVTQAIRTLIVRGAPAIGIVAGWGAVLAAREIEAVDGIEALRKLEPALQRLHAARPTAVNLAWVLARMRRTLSAAHADWRQVMECEAESIAREDITANRCMGAYGAALIPIGSGVLTHCNTGSLATAGFGTALGVIRAGIAQGRIARVFAGETRPWLQGARLTVWELQQDGIDATLIADSAAAHLMKSGQVQWVIVGADRICANGDTANKIGTYQLAITARHHGVKFMVVASAATVDMDTTAGEAIEIEQRDPEELLGVSGVRTVAEGIAAWNPVFDVTPGALIDAIVTERGVIQSPDAAQMRATFSN</sequence>
<accession>B0U5G3</accession>